<evidence type="ECO:0000250" key="1"/>
<evidence type="ECO:0000255" key="2"/>
<evidence type="ECO:0000256" key="3">
    <source>
        <dbReference type="SAM" id="MobiDB-lite"/>
    </source>
</evidence>
<evidence type="ECO:0000305" key="4"/>
<proteinExistence type="inferred from homology"/>
<feature type="chain" id="PRO_0000330103" description="Mitochondrial division protein 1">
    <location>
        <begin position="1"/>
        <end position="668"/>
    </location>
</feature>
<feature type="repeat" description="WD 1">
    <location>
        <begin position="323"/>
        <end position="364"/>
    </location>
</feature>
<feature type="repeat" description="WD 2">
    <location>
        <begin position="365"/>
        <end position="402"/>
    </location>
</feature>
<feature type="repeat" description="WD 3">
    <location>
        <begin position="445"/>
        <end position="484"/>
    </location>
</feature>
<feature type="repeat" description="WD 4">
    <location>
        <begin position="490"/>
        <end position="549"/>
    </location>
</feature>
<feature type="repeat" description="WD 5">
    <location>
        <begin position="552"/>
        <end position="591"/>
    </location>
</feature>
<feature type="repeat" description="WD 6">
    <location>
        <begin position="593"/>
        <end position="628"/>
    </location>
</feature>
<feature type="repeat" description="WD 7">
    <location>
        <begin position="634"/>
        <end position="668"/>
    </location>
</feature>
<feature type="region of interest" description="Disordered" evidence="3">
    <location>
        <begin position="1"/>
        <end position="32"/>
    </location>
</feature>
<feature type="region of interest" description="Disordered" evidence="3">
    <location>
        <begin position="137"/>
        <end position="178"/>
    </location>
</feature>
<feature type="region of interest" description="Disordered" evidence="3">
    <location>
        <begin position="403"/>
        <end position="438"/>
    </location>
</feature>
<feature type="coiled-coil region" evidence="2">
    <location>
        <begin position="193"/>
        <end position="259"/>
    </location>
</feature>
<feature type="compositionally biased region" description="Polar residues" evidence="3">
    <location>
        <begin position="7"/>
        <end position="17"/>
    </location>
</feature>
<feature type="compositionally biased region" description="Basic residues" evidence="3">
    <location>
        <begin position="145"/>
        <end position="155"/>
    </location>
</feature>
<feature type="compositionally biased region" description="Acidic residues" evidence="3">
    <location>
        <begin position="409"/>
        <end position="419"/>
    </location>
</feature>
<protein>
    <recommendedName>
        <fullName>Mitochondrial division protein 1</fullName>
    </recommendedName>
</protein>
<name>MDV1_COCIM</name>
<organism>
    <name type="scientific">Coccidioides immitis (strain RS)</name>
    <name type="common">Valley fever fungus</name>
    <dbReference type="NCBI Taxonomy" id="246410"/>
    <lineage>
        <taxon>Eukaryota</taxon>
        <taxon>Fungi</taxon>
        <taxon>Dikarya</taxon>
        <taxon>Ascomycota</taxon>
        <taxon>Pezizomycotina</taxon>
        <taxon>Eurotiomycetes</taxon>
        <taxon>Eurotiomycetidae</taxon>
        <taxon>Onygenales</taxon>
        <taxon>Onygenaceae</taxon>
        <taxon>Coccidioides</taxon>
    </lineage>
</organism>
<accession>Q1DIW7</accession>
<accession>A0A0D8JT01</accession>
<accession>J3K0S3</accession>
<comment type="function">
    <text evidence="1">Involved in mitochondrial fission. Acts as an adapter protein required to form mitochondrial fission complexes. Formation of these complexes is required to promote constriction and fission of the mitochondrial compartment at a late step in mitochondrial division (By similarity).</text>
</comment>
<comment type="subcellular location">
    <subcellularLocation>
        <location evidence="1">Mitochondrion outer membrane</location>
        <topology evidence="1">Peripheral membrane protein</topology>
        <orientation evidence="1">Cytoplasmic side</orientation>
    </subcellularLocation>
</comment>
<comment type="similarity">
    <text evidence="4">Belongs to the WD repeat MDV1/CAF4 family.</text>
</comment>
<sequence length="668" mass="74428">MADPQPRSDSPSGQSAVSHDEDEGSVLGTGLTTRHIEAFGRKVTTTASHLMAPKSDPTLTTHYQSAMSDIQRELRRPTVQRKVFSFAQTTPTDLVRSKLSTSEIQYRALSALPDELLANIPEDTSTYSLFQGFQASMPEDDNEHRKSHRRRRSHGQKLLEDSGKSSRPLPQTVGSLKRERDVLNRRLEMMGIRKNMCSAEIHEIDNKIANLNNMRKIVLDRLAGLEMDEAELEHELVQLDNRLEDMEEAMEESATLISTPKAVDDEVTLDSENQAMDASFMSESIYEKIPSPKAWKHKSLRKRSMPILHEHFEPGSMIRELQAHNDMITAMDFDVPFGTMVSSALDDTVRVWDLNLGRCMGFLEGHHASVRCLQVENNIVATGSMDASIRLWDLSRASYAPRDNRITRDDEEDDDDALGYEDPSAEPPPPPPSSMEDCPLFSLEAHVDEVTALHFRGDTLISGSADKTLRQWDLVKGRCVQTLDVLWAAAQASSIMGGGDSQWRPTGRLPDASADFVGALQCFDAALACGTADGMIRLWDLRSGQVHRSLVGHTGPITCLQFDDVHLITGSLDRSIRIWDLRTGSIYDAYAYDHPITSMMFDTRRIVAAAGEDVVKVYDKTDGRHWDCGAGVTAEEEGITPAIVERVRIKDGYLTEGRKDGTIGIWTC</sequence>
<reference key="1">
    <citation type="journal article" date="2009" name="Genome Res.">
        <title>Comparative genomic analyses of the human fungal pathogens Coccidioides and their relatives.</title>
        <authorList>
            <person name="Sharpton T.J."/>
            <person name="Stajich J.E."/>
            <person name="Rounsley S.D."/>
            <person name="Gardner M.J."/>
            <person name="Wortman J.R."/>
            <person name="Jordar V.S."/>
            <person name="Maiti R."/>
            <person name="Kodira C.D."/>
            <person name="Neafsey D.E."/>
            <person name="Zeng Q."/>
            <person name="Hung C.-Y."/>
            <person name="McMahan C."/>
            <person name="Muszewska A."/>
            <person name="Grynberg M."/>
            <person name="Mandel M.A."/>
            <person name="Kellner E.M."/>
            <person name="Barker B.M."/>
            <person name="Galgiani J.N."/>
            <person name="Orbach M.J."/>
            <person name="Kirkland T.N."/>
            <person name="Cole G.T."/>
            <person name="Henn M.R."/>
            <person name="Birren B.W."/>
            <person name="Taylor J.W."/>
        </authorList>
    </citation>
    <scope>NUCLEOTIDE SEQUENCE [LARGE SCALE GENOMIC DNA]</scope>
    <source>
        <strain>RS</strain>
    </source>
</reference>
<reference key="2">
    <citation type="journal article" date="2010" name="Genome Res.">
        <title>Population genomic sequencing of Coccidioides fungi reveals recent hybridization and transposon control.</title>
        <authorList>
            <person name="Neafsey D.E."/>
            <person name="Barker B.M."/>
            <person name="Sharpton T.J."/>
            <person name="Stajich J.E."/>
            <person name="Park D.J."/>
            <person name="Whiston E."/>
            <person name="Hung C.-Y."/>
            <person name="McMahan C."/>
            <person name="White J."/>
            <person name="Sykes S."/>
            <person name="Heiman D."/>
            <person name="Young S."/>
            <person name="Zeng Q."/>
            <person name="Abouelleil A."/>
            <person name="Aftuck L."/>
            <person name="Bessette D."/>
            <person name="Brown A."/>
            <person name="FitzGerald M."/>
            <person name="Lui A."/>
            <person name="Macdonald J.P."/>
            <person name="Priest M."/>
            <person name="Orbach M.J."/>
            <person name="Galgiani J.N."/>
            <person name="Kirkland T.N."/>
            <person name="Cole G.T."/>
            <person name="Birren B.W."/>
            <person name="Henn M.R."/>
            <person name="Taylor J.W."/>
            <person name="Rounsley S.D."/>
        </authorList>
    </citation>
    <scope>GENOME REANNOTATION</scope>
    <source>
        <strain>RS</strain>
    </source>
</reference>
<keyword id="KW-0175">Coiled coil</keyword>
<keyword id="KW-0472">Membrane</keyword>
<keyword id="KW-0496">Mitochondrion</keyword>
<keyword id="KW-1000">Mitochondrion outer membrane</keyword>
<keyword id="KW-1185">Reference proteome</keyword>
<keyword id="KW-0677">Repeat</keyword>
<keyword id="KW-0853">WD repeat</keyword>
<dbReference type="EMBL" id="GG704912">
    <property type="protein sequence ID" value="KJF60417.1"/>
    <property type="molecule type" value="Genomic_DNA"/>
</dbReference>
<dbReference type="RefSeq" id="XP_012214191.1">
    <property type="nucleotide sequence ID" value="XM_012358768.1"/>
</dbReference>
<dbReference type="SMR" id="Q1DIW7"/>
<dbReference type="FunCoup" id="Q1DIW7">
    <property type="interactions" value="36"/>
</dbReference>
<dbReference type="STRING" id="246410.Q1DIW7"/>
<dbReference type="GeneID" id="24164129"/>
<dbReference type="KEGG" id="cim:CIMG_12420"/>
<dbReference type="VEuPathDB" id="FungiDB:CIMG_12420"/>
<dbReference type="InParanoid" id="Q1DIW7"/>
<dbReference type="OMA" id="ERLRYMD"/>
<dbReference type="OrthoDB" id="496at2759"/>
<dbReference type="Proteomes" id="UP000001261">
    <property type="component" value="Unassembled WGS sequence"/>
</dbReference>
<dbReference type="GO" id="GO:0005741">
    <property type="term" value="C:mitochondrial outer membrane"/>
    <property type="evidence" value="ECO:0007669"/>
    <property type="project" value="UniProtKB-SubCell"/>
</dbReference>
<dbReference type="GO" id="GO:0000266">
    <property type="term" value="P:mitochondrial fission"/>
    <property type="evidence" value="ECO:0007669"/>
    <property type="project" value="TreeGrafter"/>
</dbReference>
<dbReference type="GO" id="GO:0016559">
    <property type="term" value="P:peroxisome fission"/>
    <property type="evidence" value="ECO:0007669"/>
    <property type="project" value="TreeGrafter"/>
</dbReference>
<dbReference type="CDD" id="cd22881">
    <property type="entry name" value="Mdv1_N"/>
    <property type="match status" value="1"/>
</dbReference>
<dbReference type="CDD" id="cd00200">
    <property type="entry name" value="WD40"/>
    <property type="match status" value="1"/>
</dbReference>
<dbReference type="FunFam" id="2.130.10.10:FF:000404">
    <property type="entry name" value="Mitochondrial division protein 1"/>
    <property type="match status" value="1"/>
</dbReference>
<dbReference type="FunFam" id="2.130.10.10:FF:000881">
    <property type="entry name" value="Mitochondrial division protein 1"/>
    <property type="match status" value="1"/>
</dbReference>
<dbReference type="Gene3D" id="6.10.280.220">
    <property type="match status" value="1"/>
</dbReference>
<dbReference type="Gene3D" id="2.130.10.10">
    <property type="entry name" value="YVTN repeat-like/Quinoprotein amine dehydrogenase"/>
    <property type="match status" value="2"/>
</dbReference>
<dbReference type="InterPro" id="IPR020472">
    <property type="entry name" value="G-protein_beta_WD-40_rep"/>
</dbReference>
<dbReference type="InterPro" id="IPR015943">
    <property type="entry name" value="WD40/YVTN_repeat-like_dom_sf"/>
</dbReference>
<dbReference type="InterPro" id="IPR019775">
    <property type="entry name" value="WD40_repeat_CS"/>
</dbReference>
<dbReference type="InterPro" id="IPR036322">
    <property type="entry name" value="WD40_repeat_dom_sf"/>
</dbReference>
<dbReference type="InterPro" id="IPR001680">
    <property type="entry name" value="WD40_rpt"/>
</dbReference>
<dbReference type="PANTHER" id="PTHR19855:SF28">
    <property type="entry name" value="CCR4-ASSOCIATED FACTOR 4"/>
    <property type="match status" value="1"/>
</dbReference>
<dbReference type="PANTHER" id="PTHR19855">
    <property type="entry name" value="WD40 REPEAT PROTEIN 12, 37"/>
    <property type="match status" value="1"/>
</dbReference>
<dbReference type="Pfam" id="PF00400">
    <property type="entry name" value="WD40"/>
    <property type="match status" value="4"/>
</dbReference>
<dbReference type="PRINTS" id="PR00320">
    <property type="entry name" value="GPROTEINBRPT"/>
</dbReference>
<dbReference type="SMART" id="SM00320">
    <property type="entry name" value="WD40"/>
    <property type="match status" value="6"/>
</dbReference>
<dbReference type="SUPFAM" id="SSF50978">
    <property type="entry name" value="WD40 repeat-like"/>
    <property type="match status" value="1"/>
</dbReference>
<dbReference type="PROSITE" id="PS00678">
    <property type="entry name" value="WD_REPEATS_1"/>
    <property type="match status" value="3"/>
</dbReference>
<dbReference type="PROSITE" id="PS50082">
    <property type="entry name" value="WD_REPEATS_2"/>
    <property type="match status" value="5"/>
</dbReference>
<dbReference type="PROSITE" id="PS50294">
    <property type="entry name" value="WD_REPEATS_REGION"/>
    <property type="match status" value="1"/>
</dbReference>
<gene>
    <name type="primary">MDV1</name>
    <name type="ORF">CIMG_12420</name>
</gene>